<comment type="similarity">
    <text evidence="1">Belongs to the UXT family.</text>
</comment>
<keyword id="KW-1185">Reference proteome</keyword>
<gene>
    <name type="ORF">DDB_G0285389</name>
</gene>
<organism>
    <name type="scientific">Dictyostelium discoideum</name>
    <name type="common">Social amoeba</name>
    <dbReference type="NCBI Taxonomy" id="44689"/>
    <lineage>
        <taxon>Eukaryota</taxon>
        <taxon>Amoebozoa</taxon>
        <taxon>Evosea</taxon>
        <taxon>Eumycetozoa</taxon>
        <taxon>Dictyostelia</taxon>
        <taxon>Dictyosteliales</taxon>
        <taxon>Dictyosteliaceae</taxon>
        <taxon>Dictyostelium</taxon>
    </lineage>
</organism>
<protein>
    <recommendedName>
        <fullName>Protein UXT homolog</fullName>
    </recommendedName>
</protein>
<proteinExistence type="inferred from homology"/>
<name>UXT_DICDI</name>
<dbReference type="EMBL" id="AAFI02000079">
    <property type="protein sequence ID" value="EAL64769.1"/>
    <property type="molecule type" value="Genomic_DNA"/>
</dbReference>
<dbReference type="RefSeq" id="XP_638247.1">
    <property type="nucleotide sequence ID" value="XM_633155.1"/>
</dbReference>
<dbReference type="SMR" id="Q54ND3"/>
<dbReference type="FunCoup" id="Q54ND3">
    <property type="interactions" value="59"/>
</dbReference>
<dbReference type="STRING" id="44689.Q54ND3"/>
<dbReference type="PaxDb" id="44689-DDB0267077"/>
<dbReference type="EnsemblProtists" id="EAL64769">
    <property type="protein sequence ID" value="EAL64769"/>
    <property type="gene ID" value="DDB_G0285389"/>
</dbReference>
<dbReference type="GeneID" id="8625055"/>
<dbReference type="KEGG" id="ddi:DDB_G0285389"/>
<dbReference type="dictyBase" id="DDB_G0285389"/>
<dbReference type="VEuPathDB" id="AmoebaDB:DDB_G0285389"/>
<dbReference type="eggNOG" id="KOG3047">
    <property type="taxonomic scope" value="Eukaryota"/>
</dbReference>
<dbReference type="HOGENOM" id="CLU_121199_2_1_1"/>
<dbReference type="InParanoid" id="Q54ND3"/>
<dbReference type="OMA" id="HMPDGYK"/>
<dbReference type="PhylomeDB" id="Q54ND3"/>
<dbReference type="PRO" id="PR:Q54ND3"/>
<dbReference type="Proteomes" id="UP000002195">
    <property type="component" value="Chromosome 4"/>
</dbReference>
<dbReference type="GO" id="GO:0000785">
    <property type="term" value="C:chromatin"/>
    <property type="evidence" value="ECO:0000318"/>
    <property type="project" value="GO_Central"/>
</dbReference>
<dbReference type="GO" id="GO:0016592">
    <property type="term" value="C:mediator complex"/>
    <property type="evidence" value="ECO:0000318"/>
    <property type="project" value="GO_Central"/>
</dbReference>
<dbReference type="GO" id="GO:0003714">
    <property type="term" value="F:transcription corepressor activity"/>
    <property type="evidence" value="ECO:0000318"/>
    <property type="project" value="GO_Central"/>
</dbReference>
<dbReference type="GO" id="GO:0000122">
    <property type="term" value="P:negative regulation of transcription by RNA polymerase II"/>
    <property type="evidence" value="ECO:0007669"/>
    <property type="project" value="InterPro"/>
</dbReference>
<dbReference type="CDD" id="cd23158">
    <property type="entry name" value="Prefoldin_UXT"/>
    <property type="match status" value="1"/>
</dbReference>
<dbReference type="FunFam" id="1.10.287.370:FF:000056">
    <property type="entry name" value="Protein UXT homolog"/>
    <property type="match status" value="1"/>
</dbReference>
<dbReference type="Gene3D" id="1.10.287.370">
    <property type="match status" value="1"/>
</dbReference>
<dbReference type="InterPro" id="IPR009053">
    <property type="entry name" value="Prefoldin"/>
</dbReference>
<dbReference type="InterPro" id="IPR004127">
    <property type="entry name" value="Prefoldin_subunit_alpha"/>
</dbReference>
<dbReference type="InterPro" id="IPR003994">
    <property type="entry name" value="UXT"/>
</dbReference>
<dbReference type="NCBIfam" id="TIGR00293">
    <property type="entry name" value="prefoldin subunit alpha"/>
    <property type="match status" value="1"/>
</dbReference>
<dbReference type="PANTHER" id="PTHR13345">
    <property type="entry name" value="MEDIATOR OF RNA POLYMERASE II TRANSCRIPTION SUBUNIT 10"/>
    <property type="match status" value="1"/>
</dbReference>
<dbReference type="PANTHER" id="PTHR13345:SF9">
    <property type="entry name" value="PROTEIN UXT"/>
    <property type="match status" value="1"/>
</dbReference>
<dbReference type="Pfam" id="PF02996">
    <property type="entry name" value="Prefoldin"/>
    <property type="match status" value="1"/>
</dbReference>
<dbReference type="PRINTS" id="PR01502">
    <property type="entry name" value="UXTPROTEIN"/>
</dbReference>
<dbReference type="SUPFAM" id="SSF46579">
    <property type="entry name" value="Prefoldin"/>
    <property type="match status" value="1"/>
</dbReference>
<sequence length="161" mass="19001">MVSHSHSHTHQNQKDIEKEKLLKERLDSIKYYETFINETLNVDLNKSIEDREKVLENLENYLELKSNIELLIENKMDSMKTMINLGSECYVKARVQDTSYIYVDIGLGIHVKYTLEEAIKFINEKETFLNKTVENQTKKINQIKTKIDLIQNGLKELKHLE</sequence>
<accession>Q54ND3</accession>
<reference key="1">
    <citation type="journal article" date="2005" name="Nature">
        <title>The genome of the social amoeba Dictyostelium discoideum.</title>
        <authorList>
            <person name="Eichinger L."/>
            <person name="Pachebat J.A."/>
            <person name="Gloeckner G."/>
            <person name="Rajandream M.A."/>
            <person name="Sucgang R."/>
            <person name="Berriman M."/>
            <person name="Song J."/>
            <person name="Olsen R."/>
            <person name="Szafranski K."/>
            <person name="Xu Q."/>
            <person name="Tunggal B."/>
            <person name="Kummerfeld S."/>
            <person name="Madera M."/>
            <person name="Konfortov B.A."/>
            <person name="Rivero F."/>
            <person name="Bankier A.T."/>
            <person name="Lehmann R."/>
            <person name="Hamlin N."/>
            <person name="Davies R."/>
            <person name="Gaudet P."/>
            <person name="Fey P."/>
            <person name="Pilcher K."/>
            <person name="Chen G."/>
            <person name="Saunders D."/>
            <person name="Sodergren E.J."/>
            <person name="Davis P."/>
            <person name="Kerhornou A."/>
            <person name="Nie X."/>
            <person name="Hall N."/>
            <person name="Anjard C."/>
            <person name="Hemphill L."/>
            <person name="Bason N."/>
            <person name="Farbrother P."/>
            <person name="Desany B."/>
            <person name="Just E."/>
            <person name="Morio T."/>
            <person name="Rost R."/>
            <person name="Churcher C.M."/>
            <person name="Cooper J."/>
            <person name="Haydock S."/>
            <person name="van Driessche N."/>
            <person name="Cronin A."/>
            <person name="Goodhead I."/>
            <person name="Muzny D.M."/>
            <person name="Mourier T."/>
            <person name="Pain A."/>
            <person name="Lu M."/>
            <person name="Harper D."/>
            <person name="Lindsay R."/>
            <person name="Hauser H."/>
            <person name="James K.D."/>
            <person name="Quiles M."/>
            <person name="Madan Babu M."/>
            <person name="Saito T."/>
            <person name="Buchrieser C."/>
            <person name="Wardroper A."/>
            <person name="Felder M."/>
            <person name="Thangavelu M."/>
            <person name="Johnson D."/>
            <person name="Knights A."/>
            <person name="Loulseged H."/>
            <person name="Mungall K.L."/>
            <person name="Oliver K."/>
            <person name="Price C."/>
            <person name="Quail M.A."/>
            <person name="Urushihara H."/>
            <person name="Hernandez J."/>
            <person name="Rabbinowitsch E."/>
            <person name="Steffen D."/>
            <person name="Sanders M."/>
            <person name="Ma J."/>
            <person name="Kohara Y."/>
            <person name="Sharp S."/>
            <person name="Simmonds M.N."/>
            <person name="Spiegler S."/>
            <person name="Tivey A."/>
            <person name="Sugano S."/>
            <person name="White B."/>
            <person name="Walker D."/>
            <person name="Woodward J.R."/>
            <person name="Winckler T."/>
            <person name="Tanaka Y."/>
            <person name="Shaulsky G."/>
            <person name="Schleicher M."/>
            <person name="Weinstock G.M."/>
            <person name="Rosenthal A."/>
            <person name="Cox E.C."/>
            <person name="Chisholm R.L."/>
            <person name="Gibbs R.A."/>
            <person name="Loomis W.F."/>
            <person name="Platzer M."/>
            <person name="Kay R.R."/>
            <person name="Williams J.G."/>
            <person name="Dear P.H."/>
            <person name="Noegel A.A."/>
            <person name="Barrell B.G."/>
            <person name="Kuspa A."/>
        </authorList>
    </citation>
    <scope>NUCLEOTIDE SEQUENCE [LARGE SCALE GENOMIC DNA]</scope>
    <source>
        <strain>AX4</strain>
    </source>
</reference>
<feature type="chain" id="PRO_0000330761" description="Protein UXT homolog">
    <location>
        <begin position="1"/>
        <end position="161"/>
    </location>
</feature>
<evidence type="ECO:0000305" key="1"/>